<protein>
    <recommendedName>
        <fullName evidence="1">Ferrochelatase</fullName>
        <ecNumber evidence="1">4.98.1.1</ecNumber>
    </recommendedName>
    <alternativeName>
        <fullName evidence="1">Heme synthase</fullName>
    </alternativeName>
    <alternativeName>
        <fullName evidence="1">Protoheme ferro-lyase</fullName>
    </alternativeName>
</protein>
<feature type="chain" id="PRO_1000189979" description="Ferrochelatase">
    <location>
        <begin position="1"/>
        <end position="344"/>
    </location>
</feature>
<feature type="binding site" evidence="1">
    <location>
        <position position="214"/>
    </location>
    <ligand>
        <name>Fe cation</name>
        <dbReference type="ChEBI" id="CHEBI:24875"/>
    </ligand>
</feature>
<feature type="binding site" evidence="1">
    <location>
        <position position="295"/>
    </location>
    <ligand>
        <name>Fe cation</name>
        <dbReference type="ChEBI" id="CHEBI:24875"/>
    </ligand>
</feature>
<dbReference type="EC" id="4.98.1.1" evidence="1"/>
<dbReference type="EMBL" id="CP000633">
    <property type="protein sequence ID" value="ACM37668.1"/>
    <property type="molecule type" value="Genomic_DNA"/>
</dbReference>
<dbReference type="RefSeq" id="WP_015917080.1">
    <property type="nucleotide sequence ID" value="NC_011989.1"/>
</dbReference>
<dbReference type="SMR" id="B9JS40"/>
<dbReference type="STRING" id="311402.Avi_3712"/>
<dbReference type="KEGG" id="avi:Avi_3712"/>
<dbReference type="eggNOG" id="COG0276">
    <property type="taxonomic scope" value="Bacteria"/>
</dbReference>
<dbReference type="HOGENOM" id="CLU_018884_0_0_5"/>
<dbReference type="UniPathway" id="UPA00252">
    <property type="reaction ID" value="UER00325"/>
</dbReference>
<dbReference type="Proteomes" id="UP000001596">
    <property type="component" value="Chromosome 1"/>
</dbReference>
<dbReference type="GO" id="GO:0005737">
    <property type="term" value="C:cytoplasm"/>
    <property type="evidence" value="ECO:0007669"/>
    <property type="project" value="UniProtKB-SubCell"/>
</dbReference>
<dbReference type="GO" id="GO:0004325">
    <property type="term" value="F:ferrochelatase activity"/>
    <property type="evidence" value="ECO:0007669"/>
    <property type="project" value="UniProtKB-UniRule"/>
</dbReference>
<dbReference type="GO" id="GO:0046872">
    <property type="term" value="F:metal ion binding"/>
    <property type="evidence" value="ECO:0007669"/>
    <property type="project" value="UniProtKB-KW"/>
</dbReference>
<dbReference type="GO" id="GO:0006783">
    <property type="term" value="P:heme biosynthetic process"/>
    <property type="evidence" value="ECO:0007669"/>
    <property type="project" value="UniProtKB-UniRule"/>
</dbReference>
<dbReference type="CDD" id="cd00419">
    <property type="entry name" value="Ferrochelatase_C"/>
    <property type="match status" value="1"/>
</dbReference>
<dbReference type="CDD" id="cd03411">
    <property type="entry name" value="Ferrochelatase_N"/>
    <property type="match status" value="1"/>
</dbReference>
<dbReference type="FunFam" id="3.40.50.1400:FF:000002">
    <property type="entry name" value="Ferrochelatase"/>
    <property type="match status" value="1"/>
</dbReference>
<dbReference type="Gene3D" id="3.40.50.1400">
    <property type="match status" value="2"/>
</dbReference>
<dbReference type="HAMAP" id="MF_00323">
    <property type="entry name" value="Ferrochelatase"/>
    <property type="match status" value="1"/>
</dbReference>
<dbReference type="InterPro" id="IPR001015">
    <property type="entry name" value="Ferrochelatase"/>
</dbReference>
<dbReference type="InterPro" id="IPR033644">
    <property type="entry name" value="Ferrochelatase_C"/>
</dbReference>
<dbReference type="InterPro" id="IPR033659">
    <property type="entry name" value="Ferrochelatase_N"/>
</dbReference>
<dbReference type="NCBIfam" id="TIGR00109">
    <property type="entry name" value="hemH"/>
    <property type="match status" value="1"/>
</dbReference>
<dbReference type="PANTHER" id="PTHR11108">
    <property type="entry name" value="FERROCHELATASE"/>
    <property type="match status" value="1"/>
</dbReference>
<dbReference type="PANTHER" id="PTHR11108:SF1">
    <property type="entry name" value="FERROCHELATASE, MITOCHONDRIAL"/>
    <property type="match status" value="1"/>
</dbReference>
<dbReference type="Pfam" id="PF00762">
    <property type="entry name" value="Ferrochelatase"/>
    <property type="match status" value="1"/>
</dbReference>
<dbReference type="SUPFAM" id="SSF53800">
    <property type="entry name" value="Chelatase"/>
    <property type="match status" value="1"/>
</dbReference>
<evidence type="ECO:0000255" key="1">
    <source>
        <dbReference type="HAMAP-Rule" id="MF_00323"/>
    </source>
</evidence>
<reference key="1">
    <citation type="journal article" date="2009" name="J. Bacteriol.">
        <title>Genome sequences of three Agrobacterium biovars help elucidate the evolution of multichromosome genomes in bacteria.</title>
        <authorList>
            <person name="Slater S.C."/>
            <person name="Goldman B.S."/>
            <person name="Goodner B."/>
            <person name="Setubal J.C."/>
            <person name="Farrand S.K."/>
            <person name="Nester E.W."/>
            <person name="Burr T.J."/>
            <person name="Banta L."/>
            <person name="Dickerman A.W."/>
            <person name="Paulsen I."/>
            <person name="Otten L."/>
            <person name="Suen G."/>
            <person name="Welch R."/>
            <person name="Almeida N.F."/>
            <person name="Arnold F."/>
            <person name="Burton O.T."/>
            <person name="Du Z."/>
            <person name="Ewing A."/>
            <person name="Godsy E."/>
            <person name="Heisel S."/>
            <person name="Houmiel K.L."/>
            <person name="Jhaveri J."/>
            <person name="Lu J."/>
            <person name="Miller N.M."/>
            <person name="Norton S."/>
            <person name="Chen Q."/>
            <person name="Phoolcharoen W."/>
            <person name="Ohlin V."/>
            <person name="Ondrusek D."/>
            <person name="Pride N."/>
            <person name="Stricklin S.L."/>
            <person name="Sun J."/>
            <person name="Wheeler C."/>
            <person name="Wilson L."/>
            <person name="Zhu H."/>
            <person name="Wood D.W."/>
        </authorList>
    </citation>
    <scope>NUCLEOTIDE SEQUENCE [LARGE SCALE GENOMIC DNA]</scope>
    <source>
        <strain>ATCC BAA-846 / DSM 112012 / S4</strain>
    </source>
</reference>
<keyword id="KW-0963">Cytoplasm</keyword>
<keyword id="KW-0350">Heme biosynthesis</keyword>
<keyword id="KW-0408">Iron</keyword>
<keyword id="KW-0456">Lyase</keyword>
<keyword id="KW-0479">Metal-binding</keyword>
<keyword id="KW-0627">Porphyrin biosynthesis</keyword>
<keyword id="KW-1185">Reference proteome</keyword>
<accession>B9JS40</accession>
<name>HEMH_ALLAM</name>
<organism>
    <name type="scientific">Allorhizobium ampelinum (strain ATCC BAA-846 / DSM 112012 / S4)</name>
    <name type="common">Agrobacterium vitis (strain S4)</name>
    <dbReference type="NCBI Taxonomy" id="311402"/>
    <lineage>
        <taxon>Bacteria</taxon>
        <taxon>Pseudomonadati</taxon>
        <taxon>Pseudomonadota</taxon>
        <taxon>Alphaproteobacteria</taxon>
        <taxon>Hyphomicrobiales</taxon>
        <taxon>Rhizobiaceae</taxon>
        <taxon>Rhizobium/Agrobacterium group</taxon>
        <taxon>Allorhizobium</taxon>
        <taxon>Allorhizobium ampelinum</taxon>
    </lineage>
</organism>
<sequence>MSAIVNHLPSEHPKVNFGKVGVLLVNLGTPDGTDYTSMRRYLREFLSDKRVIEWSRLFWYPILYGIVLNTRPGKVGKAYAEIWNNDLNESYLRTYTRNQAEKMAVSLTDMPNVVVDWAMRYGQPSIKSRMDALQKAGCEKILLFPLYPQYAAATTATVNDEAFKALLKMRWQPALRTVPQYSDDPVYIDALANSIEAHLASLDWEPELVLTSFHGIPKSYFMKGDPYHCQCYKTGRLLRERLGWPKEKLMVTFQSRFGPEEWLQPYTDKTVEKLAKDGVKRIAVINPGFVSDCLETLEEIAGEAGEIFHHAGGEKFSHIPCLNDSPDGMRVLENVVRRELQGWV</sequence>
<gene>
    <name evidence="1" type="primary">hemH</name>
    <name type="ordered locus">Avi_3712</name>
</gene>
<comment type="function">
    <text evidence="1">Catalyzes the ferrous insertion into protoporphyrin IX.</text>
</comment>
<comment type="catalytic activity">
    <reaction evidence="1">
        <text>heme b + 2 H(+) = protoporphyrin IX + Fe(2+)</text>
        <dbReference type="Rhea" id="RHEA:22584"/>
        <dbReference type="ChEBI" id="CHEBI:15378"/>
        <dbReference type="ChEBI" id="CHEBI:29033"/>
        <dbReference type="ChEBI" id="CHEBI:57306"/>
        <dbReference type="ChEBI" id="CHEBI:60344"/>
        <dbReference type="EC" id="4.98.1.1"/>
    </reaction>
</comment>
<comment type="pathway">
    <text evidence="1">Porphyrin-containing compound metabolism; protoheme biosynthesis; protoheme from protoporphyrin-IX: step 1/1.</text>
</comment>
<comment type="subcellular location">
    <subcellularLocation>
        <location evidence="1">Cytoplasm</location>
    </subcellularLocation>
</comment>
<comment type="similarity">
    <text evidence="1">Belongs to the ferrochelatase family.</text>
</comment>
<proteinExistence type="inferred from homology"/>